<sequence>MFSNIDHKAVAALLHGQGCANILKTVLDNCKVSSVSTEPLINTILDSFSLALSSVNSPNRQPHHESSSRDMAGLVPQRSSKKKICGVKGLEIYRDDSPNPRLDDGFTWRKYGQKTIKTSLYQRCYYRCAYAKDQNCYATKRVQMIQDSPPVYRTTYLGQHTCKAFGVHDNTYGSEMINFDQVVSESVMRQLATIGEQAVLMEDEANHIMNQEYDINDYLVDDEVFWGNEFPLFSSEDLMLF</sequence>
<proteinExistence type="evidence at transcript level"/>
<feature type="chain" id="PRO_0000133704" description="Probable WRKY transcription factor 63">
    <location>
        <begin position="1"/>
        <end position="241"/>
    </location>
</feature>
<feature type="DNA-binding region" description="WRKY" evidence="2">
    <location>
        <begin position="97"/>
        <end position="165"/>
    </location>
</feature>
<feature type="region of interest" description="Disordered" evidence="3">
    <location>
        <begin position="56"/>
        <end position="79"/>
    </location>
</feature>
<name>WRK63_ARATH</name>
<evidence type="ECO:0000250" key="1"/>
<evidence type="ECO:0000255" key="2">
    <source>
        <dbReference type="PROSITE-ProRule" id="PRU00223"/>
    </source>
</evidence>
<evidence type="ECO:0000256" key="3">
    <source>
        <dbReference type="SAM" id="MobiDB-lite"/>
    </source>
</evidence>
<evidence type="ECO:0000305" key="4"/>
<gene>
    <name type="primary">WRKY63</name>
    <name type="ordered locus">At1g66600</name>
    <name type="ORF">T12I7.5</name>
</gene>
<dbReference type="EMBL" id="AF452172">
    <property type="protein sequence ID" value="AAL50782.1"/>
    <property type="molecule type" value="mRNA"/>
</dbReference>
<dbReference type="EMBL" id="AC079285">
    <property type="protein sequence ID" value="AAG51176.1"/>
    <property type="molecule type" value="Genomic_DNA"/>
</dbReference>
<dbReference type="EMBL" id="CP002684">
    <property type="protein sequence ID" value="AEE34534.1"/>
    <property type="molecule type" value="Genomic_DNA"/>
</dbReference>
<dbReference type="PIR" id="H96691">
    <property type="entry name" value="H96691"/>
</dbReference>
<dbReference type="SMR" id="Q9C6H5"/>
<dbReference type="STRING" id="3702.Q9C6H5"/>
<dbReference type="iPTMnet" id="Q9C6H5"/>
<dbReference type="PaxDb" id="3702-AT1G66600.1"/>
<dbReference type="EnsemblPlants" id="AT1G66600.1">
    <property type="protein sequence ID" value="AT1G66600.1"/>
    <property type="gene ID" value="AT1G66600"/>
</dbReference>
<dbReference type="GeneID" id="842978"/>
<dbReference type="Gramene" id="AT1G66600.1">
    <property type="protein sequence ID" value="AT1G66600.1"/>
    <property type="gene ID" value="AT1G66600"/>
</dbReference>
<dbReference type="KEGG" id="ath:AT1G66600"/>
<dbReference type="Araport" id="AT1G66600"/>
<dbReference type="TAIR" id="AT1G66600">
    <property type="gene designation" value="ABO3"/>
</dbReference>
<dbReference type="HOGENOM" id="CLU_100759_0_0_1"/>
<dbReference type="InParanoid" id="Q9C6H5"/>
<dbReference type="OrthoDB" id="2021064at2759"/>
<dbReference type="PhylomeDB" id="Q9C6H5"/>
<dbReference type="PRO" id="PR:Q9C6H5"/>
<dbReference type="Proteomes" id="UP000006548">
    <property type="component" value="Chromosome 1"/>
</dbReference>
<dbReference type="ExpressionAtlas" id="Q9C6H5">
    <property type="expression patterns" value="baseline and differential"/>
</dbReference>
<dbReference type="GO" id="GO:0005634">
    <property type="term" value="C:nucleus"/>
    <property type="evidence" value="ECO:0000314"/>
    <property type="project" value="TAIR"/>
</dbReference>
<dbReference type="GO" id="GO:0003700">
    <property type="term" value="F:DNA-binding transcription factor activity"/>
    <property type="evidence" value="ECO:0000250"/>
    <property type="project" value="TAIR"/>
</dbReference>
<dbReference type="GO" id="GO:0000976">
    <property type="term" value="F:transcription cis-regulatory region binding"/>
    <property type="evidence" value="ECO:0000353"/>
    <property type="project" value="TAIR"/>
</dbReference>
<dbReference type="GO" id="GO:0009738">
    <property type="term" value="P:abscisic acid-activated signaling pathway"/>
    <property type="evidence" value="ECO:0000315"/>
    <property type="project" value="TAIR"/>
</dbReference>
<dbReference type="GO" id="GO:0006355">
    <property type="term" value="P:regulation of DNA-templated transcription"/>
    <property type="evidence" value="ECO:0000304"/>
    <property type="project" value="TAIR"/>
</dbReference>
<dbReference type="Gene3D" id="2.20.25.80">
    <property type="entry name" value="WRKY domain"/>
    <property type="match status" value="1"/>
</dbReference>
<dbReference type="InterPro" id="IPR003657">
    <property type="entry name" value="WRKY_dom"/>
</dbReference>
<dbReference type="InterPro" id="IPR036576">
    <property type="entry name" value="WRKY_dom_sf"/>
</dbReference>
<dbReference type="InterPro" id="IPR044810">
    <property type="entry name" value="WRKY_plant"/>
</dbReference>
<dbReference type="PANTHER" id="PTHR31282">
    <property type="entry name" value="WRKY TRANSCRIPTION FACTOR 21-RELATED"/>
    <property type="match status" value="1"/>
</dbReference>
<dbReference type="Pfam" id="PF03106">
    <property type="entry name" value="WRKY"/>
    <property type="match status" value="1"/>
</dbReference>
<dbReference type="SMART" id="SM00774">
    <property type="entry name" value="WRKY"/>
    <property type="match status" value="1"/>
</dbReference>
<dbReference type="SUPFAM" id="SSF118290">
    <property type="entry name" value="WRKY DNA-binding domain"/>
    <property type="match status" value="1"/>
</dbReference>
<dbReference type="PROSITE" id="PS50811">
    <property type="entry name" value="WRKY"/>
    <property type="match status" value="1"/>
</dbReference>
<reference key="1">
    <citation type="submission" date="2001-11" db="EMBL/GenBank/DDBJ databases">
        <title>Arabidopsis thaliana transcription factor WRKY63.</title>
        <authorList>
            <person name="Kushnir S."/>
            <person name="Ulker B."/>
            <person name="Somssich I.E."/>
        </authorList>
    </citation>
    <scope>NUCLEOTIDE SEQUENCE [MRNA]</scope>
    <source>
        <strain>cv. Columbia</strain>
        <tissue>Flower</tissue>
    </source>
</reference>
<reference key="2">
    <citation type="journal article" date="2000" name="Nature">
        <title>Sequence and analysis of chromosome 1 of the plant Arabidopsis thaliana.</title>
        <authorList>
            <person name="Theologis A."/>
            <person name="Ecker J.R."/>
            <person name="Palm C.J."/>
            <person name="Federspiel N.A."/>
            <person name="Kaul S."/>
            <person name="White O."/>
            <person name="Alonso J."/>
            <person name="Altafi H."/>
            <person name="Araujo R."/>
            <person name="Bowman C.L."/>
            <person name="Brooks S.Y."/>
            <person name="Buehler E."/>
            <person name="Chan A."/>
            <person name="Chao Q."/>
            <person name="Chen H."/>
            <person name="Cheuk R.F."/>
            <person name="Chin C.W."/>
            <person name="Chung M.K."/>
            <person name="Conn L."/>
            <person name="Conway A.B."/>
            <person name="Conway A.R."/>
            <person name="Creasy T.H."/>
            <person name="Dewar K."/>
            <person name="Dunn P."/>
            <person name="Etgu P."/>
            <person name="Feldblyum T.V."/>
            <person name="Feng J.-D."/>
            <person name="Fong B."/>
            <person name="Fujii C.Y."/>
            <person name="Gill J.E."/>
            <person name="Goldsmith A.D."/>
            <person name="Haas B."/>
            <person name="Hansen N.F."/>
            <person name="Hughes B."/>
            <person name="Huizar L."/>
            <person name="Hunter J.L."/>
            <person name="Jenkins J."/>
            <person name="Johnson-Hopson C."/>
            <person name="Khan S."/>
            <person name="Khaykin E."/>
            <person name="Kim C.J."/>
            <person name="Koo H.L."/>
            <person name="Kremenetskaia I."/>
            <person name="Kurtz D.B."/>
            <person name="Kwan A."/>
            <person name="Lam B."/>
            <person name="Langin-Hooper S."/>
            <person name="Lee A."/>
            <person name="Lee J.M."/>
            <person name="Lenz C.A."/>
            <person name="Li J.H."/>
            <person name="Li Y.-P."/>
            <person name="Lin X."/>
            <person name="Liu S.X."/>
            <person name="Liu Z.A."/>
            <person name="Luros J.S."/>
            <person name="Maiti R."/>
            <person name="Marziali A."/>
            <person name="Militscher J."/>
            <person name="Miranda M."/>
            <person name="Nguyen M."/>
            <person name="Nierman W.C."/>
            <person name="Osborne B.I."/>
            <person name="Pai G."/>
            <person name="Peterson J."/>
            <person name="Pham P.K."/>
            <person name="Rizzo M."/>
            <person name="Rooney T."/>
            <person name="Rowley D."/>
            <person name="Sakano H."/>
            <person name="Salzberg S.L."/>
            <person name="Schwartz J.R."/>
            <person name="Shinn P."/>
            <person name="Southwick A.M."/>
            <person name="Sun H."/>
            <person name="Tallon L.J."/>
            <person name="Tambunga G."/>
            <person name="Toriumi M.J."/>
            <person name="Town C.D."/>
            <person name="Utterback T."/>
            <person name="Van Aken S."/>
            <person name="Vaysberg M."/>
            <person name="Vysotskaia V.S."/>
            <person name="Walker M."/>
            <person name="Wu D."/>
            <person name="Yu G."/>
            <person name="Fraser C.M."/>
            <person name="Venter J.C."/>
            <person name="Davis R.W."/>
        </authorList>
    </citation>
    <scope>NUCLEOTIDE SEQUENCE [LARGE SCALE GENOMIC DNA]</scope>
    <source>
        <strain>cv. Columbia</strain>
    </source>
</reference>
<reference key="3">
    <citation type="journal article" date="2017" name="Plant J.">
        <title>Araport11: a complete reannotation of the Arabidopsis thaliana reference genome.</title>
        <authorList>
            <person name="Cheng C.Y."/>
            <person name="Krishnakumar V."/>
            <person name="Chan A.P."/>
            <person name="Thibaud-Nissen F."/>
            <person name="Schobel S."/>
            <person name="Town C.D."/>
        </authorList>
    </citation>
    <scope>GENOME REANNOTATION</scope>
    <source>
        <strain>cv. Columbia</strain>
    </source>
</reference>
<comment type="function">
    <text evidence="1">Transcription factor. Interacts specifically with the W box (5'-(T)TGAC[CT]-3'), a frequently occurring elicitor-responsive cis-acting element (By similarity).</text>
</comment>
<comment type="subcellular location">
    <subcellularLocation>
        <location evidence="4">Nucleus</location>
    </subcellularLocation>
</comment>
<comment type="similarity">
    <text evidence="4">Belongs to the WRKY group III family.</text>
</comment>
<keyword id="KW-0238">DNA-binding</keyword>
<keyword id="KW-0539">Nucleus</keyword>
<keyword id="KW-1185">Reference proteome</keyword>
<keyword id="KW-0804">Transcription</keyword>
<keyword id="KW-0805">Transcription regulation</keyword>
<organism>
    <name type="scientific">Arabidopsis thaliana</name>
    <name type="common">Mouse-ear cress</name>
    <dbReference type="NCBI Taxonomy" id="3702"/>
    <lineage>
        <taxon>Eukaryota</taxon>
        <taxon>Viridiplantae</taxon>
        <taxon>Streptophyta</taxon>
        <taxon>Embryophyta</taxon>
        <taxon>Tracheophyta</taxon>
        <taxon>Spermatophyta</taxon>
        <taxon>Magnoliopsida</taxon>
        <taxon>eudicotyledons</taxon>
        <taxon>Gunneridae</taxon>
        <taxon>Pentapetalae</taxon>
        <taxon>rosids</taxon>
        <taxon>malvids</taxon>
        <taxon>Brassicales</taxon>
        <taxon>Brassicaceae</taxon>
        <taxon>Camelineae</taxon>
        <taxon>Arabidopsis</taxon>
    </lineage>
</organism>
<protein>
    <recommendedName>
        <fullName>Probable WRKY transcription factor 63</fullName>
    </recommendedName>
    <alternativeName>
        <fullName>WRKY DNA-binding protein 63</fullName>
    </alternativeName>
</protein>
<accession>Q9C6H5</accession>